<evidence type="ECO:0000250" key="1"/>
<evidence type="ECO:0000250" key="2">
    <source>
        <dbReference type="UniProtKB" id="O08576"/>
    </source>
</evidence>
<evidence type="ECO:0000255" key="3"/>
<evidence type="ECO:0000255" key="4">
    <source>
        <dbReference type="PROSITE-ProRule" id="PRU00178"/>
    </source>
</evidence>
<evidence type="ECO:0000256" key="5">
    <source>
        <dbReference type="SAM" id="MobiDB-lite"/>
    </source>
</evidence>
<evidence type="ECO:0000305" key="6"/>
<dbReference type="EMBL" id="CR861001">
    <property type="protein sequence ID" value="CAH93101.1"/>
    <property type="molecule type" value="mRNA"/>
</dbReference>
<dbReference type="RefSeq" id="NP_001126835.1">
    <property type="nucleotide sequence ID" value="NM_001133363.1"/>
</dbReference>
<dbReference type="SMR" id="Q5R565"/>
<dbReference type="FunCoup" id="Q5R565">
    <property type="interactions" value="915"/>
</dbReference>
<dbReference type="STRING" id="9601.ENSPPYP00000009369"/>
<dbReference type="Ensembl" id="ENSPPYT00000061392.1">
    <property type="protein sequence ID" value="ENSPPYP00000041166.1"/>
    <property type="gene ID" value="ENSPPYG00000008334.3"/>
</dbReference>
<dbReference type="GeneID" id="100173842"/>
<dbReference type="KEGG" id="pon:100173842"/>
<dbReference type="CTD" id="10900"/>
<dbReference type="eggNOG" id="KOG4381">
    <property type="taxonomic scope" value="Eukaryota"/>
</dbReference>
<dbReference type="GeneTree" id="ENSGT00940000158922"/>
<dbReference type="InParanoid" id="Q5R565"/>
<dbReference type="OrthoDB" id="10029904at2759"/>
<dbReference type="Proteomes" id="UP000001595">
    <property type="component" value="Chromosome 17"/>
</dbReference>
<dbReference type="GO" id="GO:0010753">
    <property type="term" value="P:positive regulation of cGMP-mediated signaling"/>
    <property type="evidence" value="ECO:0007669"/>
    <property type="project" value="TreeGrafter"/>
</dbReference>
<dbReference type="CDD" id="cd17699">
    <property type="entry name" value="RUN_RUNDC3A"/>
    <property type="match status" value="1"/>
</dbReference>
<dbReference type="FunFam" id="1.20.58.900:FF:000005">
    <property type="entry name" value="RUN domain-containing protein 3A isoform X1"/>
    <property type="match status" value="1"/>
</dbReference>
<dbReference type="Gene3D" id="1.20.58.900">
    <property type="match status" value="1"/>
</dbReference>
<dbReference type="InterPro" id="IPR004012">
    <property type="entry name" value="Run_dom"/>
</dbReference>
<dbReference type="InterPro" id="IPR037213">
    <property type="entry name" value="Run_dom_sf"/>
</dbReference>
<dbReference type="InterPro" id="IPR047338">
    <property type="entry name" value="RUN_RUNDC3A"/>
</dbReference>
<dbReference type="InterPro" id="IPR047340">
    <property type="entry name" value="RUNDC3A_B"/>
</dbReference>
<dbReference type="PANTHER" id="PTHR46251">
    <property type="entry name" value="RUN DOMAIN-CONTAINING 3 PROTEIN RUNDC3"/>
    <property type="match status" value="1"/>
</dbReference>
<dbReference type="PANTHER" id="PTHR46251:SF4">
    <property type="entry name" value="RUN DOMAIN-CONTAINING PROTEIN 3A"/>
    <property type="match status" value="1"/>
</dbReference>
<dbReference type="Pfam" id="PF02759">
    <property type="entry name" value="RUN"/>
    <property type="match status" value="1"/>
</dbReference>
<dbReference type="SMART" id="SM00593">
    <property type="entry name" value="RUN"/>
    <property type="match status" value="1"/>
</dbReference>
<dbReference type="SUPFAM" id="SSF140741">
    <property type="entry name" value="RUN domain-like"/>
    <property type="match status" value="1"/>
</dbReference>
<dbReference type="PROSITE" id="PS50826">
    <property type="entry name" value="RUN"/>
    <property type="match status" value="1"/>
</dbReference>
<keyword id="KW-0175">Coiled coil</keyword>
<keyword id="KW-0597">Phosphoprotein</keyword>
<keyword id="KW-1185">Reference proteome</keyword>
<name>RUN3A_PONAB</name>
<sequence>METSFVQTTMALGLSSKKASSRNVAVERKNLITVCRFSVKTLLEKYTAEPIDDSSEEFVNFAAILEQILSHRFKACAPAGPVSWFSSDGQRGFWDYIRLACSKVPNNCVSSIENMENISTARAKGRAWIRVALMEKRMSEYITTALRDTRTTRRFYDSGAIMLRDEATILTGMLIGLSAIDFSFCLKGEVLDGKTPVVIDYTPYLKFTQSYDYLTDEEERHSAESSTSEDNSPEHPYLPLVTDEDSWYSKWHKMEQKFRIVYAQKGYLEELVRLRESQLKDLEAENRRLQLQLEEAAAQNQREKRELEGVILELQEQLTGLIPSDHAPLAQGSKELTTPLVNQWPSLGTLNGAEGASNSKLYRRHSFMSTEPLSAEASLSSDSQRLGEGTRDEEPWGPIGKDPTPSMLGLCGSLASIPSCKSLASFKSNECLVSDSPEGSPALSPS</sequence>
<gene>
    <name type="primary">RUNDC3A</name>
</gene>
<organism>
    <name type="scientific">Pongo abelii</name>
    <name type="common">Sumatran orangutan</name>
    <name type="synonym">Pongo pygmaeus abelii</name>
    <dbReference type="NCBI Taxonomy" id="9601"/>
    <lineage>
        <taxon>Eukaryota</taxon>
        <taxon>Metazoa</taxon>
        <taxon>Chordata</taxon>
        <taxon>Craniata</taxon>
        <taxon>Vertebrata</taxon>
        <taxon>Euteleostomi</taxon>
        <taxon>Mammalia</taxon>
        <taxon>Eutheria</taxon>
        <taxon>Euarchontoglires</taxon>
        <taxon>Primates</taxon>
        <taxon>Haplorrhini</taxon>
        <taxon>Catarrhini</taxon>
        <taxon>Hominidae</taxon>
        <taxon>Pongo</taxon>
    </lineage>
</organism>
<proteinExistence type="evidence at transcript level"/>
<accession>Q5R565</accession>
<comment type="function">
    <text evidence="1">May act as an effector of RAP2A in neuronal cells.</text>
</comment>
<comment type="subunit">
    <text evidence="1">Interacts with the GTP-bound form of RAP2A.</text>
</comment>
<comment type="similarity">
    <text evidence="6">Belongs to the RUNDC3 family.</text>
</comment>
<protein>
    <recommendedName>
        <fullName>RUN domain-containing protein 3A</fullName>
    </recommendedName>
</protein>
<reference key="1">
    <citation type="submission" date="2004-11" db="EMBL/GenBank/DDBJ databases">
        <authorList>
            <consortium name="The German cDNA consortium"/>
        </authorList>
    </citation>
    <scope>NUCLEOTIDE SEQUENCE [LARGE SCALE MRNA]</scope>
    <source>
        <tissue>Brain cortex</tissue>
    </source>
</reference>
<feature type="chain" id="PRO_0000324157" description="RUN domain-containing protein 3A">
    <location>
        <begin position="1"/>
        <end position="446"/>
    </location>
</feature>
<feature type="domain" description="RUN" evidence="4">
    <location>
        <begin position="52"/>
        <end position="189"/>
    </location>
</feature>
<feature type="region of interest" description="Interaction with RAP2A" evidence="1">
    <location>
        <begin position="1"/>
        <end position="298"/>
    </location>
</feature>
<feature type="region of interest" description="Disordered" evidence="5">
    <location>
        <begin position="216"/>
        <end position="239"/>
    </location>
</feature>
<feature type="region of interest" description="Disordered" evidence="5">
    <location>
        <begin position="372"/>
        <end position="404"/>
    </location>
</feature>
<feature type="coiled-coil region" evidence="3">
    <location>
        <begin position="267"/>
        <end position="322"/>
    </location>
</feature>
<feature type="compositionally biased region" description="Polar residues" evidence="5">
    <location>
        <begin position="372"/>
        <end position="384"/>
    </location>
</feature>
<feature type="modified residue" description="Phosphothreonine" evidence="2">
    <location>
        <position position="215"/>
    </location>
</feature>
<feature type="modified residue" description="Phosphoserine" evidence="2">
    <location>
        <position position="232"/>
    </location>
</feature>
<feature type="modified residue" description="Phosphoserine" evidence="2">
    <location>
        <position position="416"/>
    </location>
</feature>
<feature type="modified residue" description="Phosphoserine" evidence="2">
    <location>
        <position position="419"/>
    </location>
</feature>